<accession>Q6IUY1</accession>
<accession>Q696L7</accession>
<proteinExistence type="evidence at transcript level"/>
<keyword id="KW-0378">Hydrolase</keyword>
<keyword id="KW-0472">Membrane</keyword>
<keyword id="KW-0645">Protease</keyword>
<keyword id="KW-0720">Serine protease</keyword>
<keyword id="KW-0812">Transmembrane</keyword>
<keyword id="KW-1133">Transmembrane helix</keyword>
<name>RHBL3_TOXGO</name>
<feature type="chain" id="PRO_0000239076" description="Rhomboid-like protease 3">
    <location>
        <begin position="1"/>
        <end position="263"/>
    </location>
</feature>
<feature type="transmembrane region" description="Helical" evidence="2">
    <location>
        <begin position="37"/>
        <end position="57"/>
    </location>
</feature>
<feature type="transmembrane region" description="Helical" evidence="2">
    <location>
        <begin position="86"/>
        <end position="106"/>
    </location>
</feature>
<feature type="transmembrane region" description="Helical" evidence="2">
    <location>
        <begin position="121"/>
        <end position="141"/>
    </location>
</feature>
<feature type="transmembrane region" description="Helical" evidence="2">
    <location>
        <begin position="142"/>
        <end position="162"/>
    </location>
</feature>
<feature type="transmembrane region" description="Helical" evidence="2">
    <location>
        <begin position="189"/>
        <end position="209"/>
    </location>
</feature>
<feature type="transmembrane region" description="Helical" evidence="2">
    <location>
        <begin position="231"/>
        <end position="251"/>
    </location>
</feature>
<feature type="active site" description="Nucleophile" evidence="1">
    <location>
        <position position="150"/>
    </location>
</feature>
<feature type="active site" evidence="1">
    <location>
        <position position="204"/>
    </location>
</feature>
<feature type="sequence conflict" description="In Ref. 2; AAT84607." evidence="4" ref="2">
    <original>S</original>
    <variation>P</variation>
    <location>
        <position position="263"/>
    </location>
</feature>
<sequence>MASSDGSDVETQSLLNSGDRTLRSWKDTVFPGISWDKSIVWITVAQIIMYIISCVLSRSYEPNERTLMLLGAAYAPAFSNFQLWRVVTPLFLHATILHLVLNLVFILHISLRLEERYGTKKFLVTYFLSAIVGNLLSMLMQPWALSVGASTAGFGIIGGMAAEVSVVWCKLSEELKRIYSMDICILAVLIYFLSFGRTVDTFGHLGGFLAGVALVCYYNKEIEDLPKWFRVLFYGCSALCATILVVSPPLLLLRYPYRVAATS</sequence>
<gene>
    <name type="primary">ROM3</name>
</gene>
<comment type="function">
    <text evidence="3">Serine protease involved in intramembrane proteolysis and the subsequent release of polypeptides from their membrane anchors.</text>
</comment>
<comment type="catalytic activity">
    <reaction>
        <text>Cleaves type-1 transmembrane domains using a catalytic dyad composed of serine and histidine that are contributed by different transmembrane domains.</text>
        <dbReference type="EC" id="3.4.21.105"/>
    </reaction>
</comment>
<comment type="subcellular location">
    <subcellularLocation>
        <location evidence="4">Membrane</location>
        <topology evidence="4">Multi-pass membrane protein</topology>
    </subcellularLocation>
</comment>
<comment type="developmental stage">
    <text evidence="3">Detected in sporozoites.</text>
</comment>
<comment type="similarity">
    <text evidence="4">Belongs to the peptidase S54 family.</text>
</comment>
<protein>
    <recommendedName>
        <fullName>Rhomboid-like protease 3</fullName>
        <ecNumber>3.4.21.105</ecNumber>
    </recommendedName>
</protein>
<reference key="1">
    <citation type="journal article" date="2004" name="Curr. Opin. Microbiol.">
        <title>Host cell invasion by the apicomplexans: the significance of microneme protein proteolysis.</title>
        <authorList>
            <person name="Dowse T."/>
            <person name="Soldati D."/>
        </authorList>
    </citation>
    <scope>NUCLEOTIDE SEQUENCE [MRNA]</scope>
    <source>
        <strain>ATCC 50861 / VEG</strain>
        <tissue>Sporozoite</tissue>
    </source>
</reference>
<reference key="2">
    <citation type="journal article" date="2005" name="Proc. Natl. Acad. Sci. U.S.A.">
        <title>A spatially localized rhomboid protease cleaves cell surface adhesins essential for invasion by Toxoplasma.</title>
        <authorList>
            <person name="Brossier F."/>
            <person name="Jewett T.J."/>
            <person name="Sibley L.D."/>
            <person name="Urban S."/>
        </authorList>
    </citation>
    <scope>NUCLEOTIDE SEQUENCE [MRNA]</scope>
    <scope>FUNCTION</scope>
    <scope>DEVELOPMENTAL STAGE</scope>
</reference>
<organism>
    <name type="scientific">Toxoplasma gondii</name>
    <dbReference type="NCBI Taxonomy" id="5811"/>
    <lineage>
        <taxon>Eukaryota</taxon>
        <taxon>Sar</taxon>
        <taxon>Alveolata</taxon>
        <taxon>Apicomplexa</taxon>
        <taxon>Conoidasida</taxon>
        <taxon>Coccidia</taxon>
        <taxon>Eucoccidiorida</taxon>
        <taxon>Eimeriorina</taxon>
        <taxon>Sarcocystidae</taxon>
        <taxon>Toxoplasma</taxon>
    </lineage>
</organism>
<dbReference type="EC" id="3.4.21.105"/>
<dbReference type="EMBL" id="AY623120">
    <property type="protein sequence ID" value="AAT39987.1"/>
    <property type="molecule type" value="mRNA"/>
</dbReference>
<dbReference type="EMBL" id="AY587209">
    <property type="protein sequence ID" value="AAT84607.1"/>
    <property type="molecule type" value="mRNA"/>
</dbReference>
<dbReference type="SMR" id="Q6IUY1"/>
<dbReference type="MEROPS" id="S54.021"/>
<dbReference type="EnsemblProtists" id="TGME49_212910-t26_1">
    <property type="protein sequence ID" value="TGME49_212910-t26_1"/>
    <property type="gene ID" value="TGME49_212910"/>
</dbReference>
<dbReference type="VEuPathDB" id="ToxoDB:TGARI_212910"/>
<dbReference type="VEuPathDB" id="ToxoDB:TGCAST_212910"/>
<dbReference type="VEuPathDB" id="ToxoDB:TGCOUG_212910"/>
<dbReference type="VEuPathDB" id="ToxoDB:TGDOM2_212910"/>
<dbReference type="VEuPathDB" id="ToxoDB:TGFOU_212910"/>
<dbReference type="VEuPathDB" id="ToxoDB:TGGT1_212910"/>
<dbReference type="VEuPathDB" id="ToxoDB:TGMAS_212910"/>
<dbReference type="VEuPathDB" id="ToxoDB:TGME49_212910"/>
<dbReference type="VEuPathDB" id="ToxoDB:TGP89_212910"/>
<dbReference type="VEuPathDB" id="ToxoDB:TGPRC2_212910"/>
<dbReference type="VEuPathDB" id="ToxoDB:TGRH88_024280"/>
<dbReference type="VEuPathDB" id="ToxoDB:TGRUB_212910"/>
<dbReference type="VEuPathDB" id="ToxoDB:TGVAND_212910"/>
<dbReference type="VEuPathDB" id="ToxoDB:TGVEG_212910"/>
<dbReference type="GO" id="GO:0016020">
    <property type="term" value="C:membrane"/>
    <property type="evidence" value="ECO:0007669"/>
    <property type="project" value="UniProtKB-SubCell"/>
</dbReference>
<dbReference type="GO" id="GO:0004252">
    <property type="term" value="F:serine-type endopeptidase activity"/>
    <property type="evidence" value="ECO:0007669"/>
    <property type="project" value="InterPro"/>
</dbReference>
<dbReference type="GO" id="GO:0006508">
    <property type="term" value="P:proteolysis"/>
    <property type="evidence" value="ECO:0007669"/>
    <property type="project" value="UniProtKB-KW"/>
</dbReference>
<dbReference type="Gene3D" id="1.20.1540.10">
    <property type="entry name" value="Rhomboid-like"/>
    <property type="match status" value="1"/>
</dbReference>
<dbReference type="InterPro" id="IPR002610">
    <property type="entry name" value="Peptidase_S54_rhomboid-like"/>
</dbReference>
<dbReference type="InterPro" id="IPR022764">
    <property type="entry name" value="Peptidase_S54_rhomboid_dom"/>
</dbReference>
<dbReference type="InterPro" id="IPR035952">
    <property type="entry name" value="Rhomboid-like_sf"/>
</dbReference>
<dbReference type="PANTHER" id="PTHR22936:SF69">
    <property type="entry name" value="RHOMBOID-LIKE PROTEIN"/>
    <property type="match status" value="1"/>
</dbReference>
<dbReference type="PANTHER" id="PTHR22936">
    <property type="entry name" value="RHOMBOID-RELATED"/>
    <property type="match status" value="1"/>
</dbReference>
<dbReference type="Pfam" id="PF01694">
    <property type="entry name" value="Rhomboid"/>
    <property type="match status" value="1"/>
</dbReference>
<dbReference type="SUPFAM" id="SSF144091">
    <property type="entry name" value="Rhomboid-like"/>
    <property type="match status" value="1"/>
</dbReference>
<evidence type="ECO:0000250" key="1"/>
<evidence type="ECO:0000255" key="2"/>
<evidence type="ECO:0000269" key="3">
    <source>
    </source>
</evidence>
<evidence type="ECO:0000305" key="4"/>